<protein>
    <recommendedName>
        <fullName evidence="2">Ornithine carbamoyltransferase</fullName>
        <shortName evidence="2">OTCase</shortName>
        <ecNumber evidence="2">2.1.3.3</ecNumber>
    </recommendedName>
</protein>
<dbReference type="EC" id="2.1.3.3" evidence="2"/>
<dbReference type="EMBL" id="AE014295">
    <property type="protein sequence ID" value="AAN24868.1"/>
    <property type="molecule type" value="Genomic_DNA"/>
</dbReference>
<dbReference type="RefSeq" id="NP_696232.1">
    <property type="nucleotide sequence ID" value="NC_004307.2"/>
</dbReference>
<dbReference type="RefSeq" id="WP_008782770.1">
    <property type="nucleotide sequence ID" value="NC_004307.2"/>
</dbReference>
<dbReference type="SMR" id="P59778"/>
<dbReference type="STRING" id="206672.BL1060"/>
<dbReference type="EnsemblBacteria" id="AAN24868">
    <property type="protein sequence ID" value="AAN24868"/>
    <property type="gene ID" value="BL1060"/>
</dbReference>
<dbReference type="KEGG" id="blo:BL1060"/>
<dbReference type="PATRIC" id="fig|206672.9.peg.767"/>
<dbReference type="HOGENOM" id="CLU_043846_3_2_11"/>
<dbReference type="OrthoDB" id="9802587at2"/>
<dbReference type="PhylomeDB" id="P59778"/>
<dbReference type="UniPathway" id="UPA00068">
    <property type="reaction ID" value="UER00112"/>
</dbReference>
<dbReference type="Proteomes" id="UP000000439">
    <property type="component" value="Chromosome"/>
</dbReference>
<dbReference type="GO" id="GO:0005737">
    <property type="term" value="C:cytoplasm"/>
    <property type="evidence" value="ECO:0007669"/>
    <property type="project" value="UniProtKB-SubCell"/>
</dbReference>
<dbReference type="GO" id="GO:0016597">
    <property type="term" value="F:amino acid binding"/>
    <property type="evidence" value="ECO:0007669"/>
    <property type="project" value="InterPro"/>
</dbReference>
<dbReference type="GO" id="GO:0004585">
    <property type="term" value="F:ornithine carbamoyltransferase activity"/>
    <property type="evidence" value="ECO:0007669"/>
    <property type="project" value="UniProtKB-UniRule"/>
</dbReference>
<dbReference type="GO" id="GO:0042450">
    <property type="term" value="P:arginine biosynthetic process via ornithine"/>
    <property type="evidence" value="ECO:0007669"/>
    <property type="project" value="TreeGrafter"/>
</dbReference>
<dbReference type="GO" id="GO:0019240">
    <property type="term" value="P:citrulline biosynthetic process"/>
    <property type="evidence" value="ECO:0007669"/>
    <property type="project" value="TreeGrafter"/>
</dbReference>
<dbReference type="GO" id="GO:0006526">
    <property type="term" value="P:L-arginine biosynthetic process"/>
    <property type="evidence" value="ECO:0007669"/>
    <property type="project" value="UniProtKB-UniRule"/>
</dbReference>
<dbReference type="FunFam" id="3.40.50.1370:FF:000008">
    <property type="entry name" value="Ornithine carbamoyltransferase"/>
    <property type="match status" value="1"/>
</dbReference>
<dbReference type="Gene3D" id="3.40.50.1370">
    <property type="entry name" value="Aspartate/ornithine carbamoyltransferase"/>
    <property type="match status" value="2"/>
</dbReference>
<dbReference type="HAMAP" id="MF_01109">
    <property type="entry name" value="OTCase"/>
    <property type="match status" value="1"/>
</dbReference>
<dbReference type="InterPro" id="IPR006132">
    <property type="entry name" value="Asp/Orn_carbamoyltranf_P-bd"/>
</dbReference>
<dbReference type="InterPro" id="IPR006130">
    <property type="entry name" value="Asp/Orn_carbamoylTrfase"/>
</dbReference>
<dbReference type="InterPro" id="IPR036901">
    <property type="entry name" value="Asp/Orn_carbamoylTrfase_sf"/>
</dbReference>
<dbReference type="InterPro" id="IPR006131">
    <property type="entry name" value="Asp_carbamoyltransf_Asp/Orn-bd"/>
</dbReference>
<dbReference type="InterPro" id="IPR002292">
    <property type="entry name" value="Orn/put_carbamltrans"/>
</dbReference>
<dbReference type="InterPro" id="IPR024904">
    <property type="entry name" value="OTCase_ArgI"/>
</dbReference>
<dbReference type="NCBIfam" id="TIGR00658">
    <property type="entry name" value="orni_carb_tr"/>
    <property type="match status" value="1"/>
</dbReference>
<dbReference type="NCBIfam" id="NF001986">
    <property type="entry name" value="PRK00779.1"/>
    <property type="match status" value="1"/>
</dbReference>
<dbReference type="PANTHER" id="PTHR45753">
    <property type="entry name" value="ORNITHINE CARBAMOYLTRANSFERASE, MITOCHONDRIAL"/>
    <property type="match status" value="1"/>
</dbReference>
<dbReference type="PANTHER" id="PTHR45753:SF3">
    <property type="entry name" value="ORNITHINE TRANSCARBAMYLASE, MITOCHONDRIAL"/>
    <property type="match status" value="1"/>
</dbReference>
<dbReference type="Pfam" id="PF00185">
    <property type="entry name" value="OTCace"/>
    <property type="match status" value="1"/>
</dbReference>
<dbReference type="Pfam" id="PF02729">
    <property type="entry name" value="OTCace_N"/>
    <property type="match status" value="1"/>
</dbReference>
<dbReference type="PRINTS" id="PR00100">
    <property type="entry name" value="AOTCASE"/>
</dbReference>
<dbReference type="PRINTS" id="PR00102">
    <property type="entry name" value="OTCASE"/>
</dbReference>
<dbReference type="SUPFAM" id="SSF53671">
    <property type="entry name" value="Aspartate/ornithine carbamoyltransferase"/>
    <property type="match status" value="1"/>
</dbReference>
<dbReference type="PROSITE" id="PS00097">
    <property type="entry name" value="CARBAMOYLTRANSFERASE"/>
    <property type="match status" value="1"/>
</dbReference>
<gene>
    <name evidence="2" type="primary">argF</name>
    <name type="ordered locus">BL1060</name>
</gene>
<reference key="1">
    <citation type="journal article" date="2002" name="Proc. Natl. Acad. Sci. U.S.A.">
        <title>The genome sequence of Bifidobacterium longum reflects its adaptation to the human gastrointestinal tract.</title>
        <authorList>
            <person name="Schell M.A."/>
            <person name="Karmirantzou M."/>
            <person name="Snel B."/>
            <person name="Vilanova D."/>
            <person name="Berger B."/>
            <person name="Pessi G."/>
            <person name="Zwahlen M.-C."/>
            <person name="Desiere F."/>
            <person name="Bork P."/>
            <person name="Delley M."/>
            <person name="Pridmore R.D."/>
            <person name="Arigoni F."/>
        </authorList>
    </citation>
    <scope>NUCLEOTIDE SEQUENCE [LARGE SCALE GENOMIC DNA]</scope>
    <source>
        <strain>NCC 2705</strain>
    </source>
</reference>
<proteinExistence type="inferred from homology"/>
<sequence>MTPELRHMLRDDDLNHEEQKQVLELAIKFHHDRFYKQPFAGPQAVAVLFDKPSTRTRSSFSIGVAELGGYPLVIDKSGSQLGRGEPVADTARVLNRMAYGVVWRTFGQGRVEEMAKYSTHPVVNALTDDFHPCQILADFQTIAEHRGGVDNLKNQTIAYLGDAANNMANSYLLGGAVAGMDVRVAGPYGYLPRPDIVADAKRVAAETGGSILVTTDAKEAVKDADCVFTDTWVSMGEEAEYAIRSKPFWDYQVNTELMALAKPDALFQHCLPAYRGKEVTAEVIDGPQSVVWDEAENRLHAQKALLTWLTGKARGDESLLA</sequence>
<accession>P59778</accession>
<name>OTC_BIFLO</name>
<evidence type="ECO:0000250" key="1"/>
<evidence type="ECO:0000255" key="2">
    <source>
        <dbReference type="HAMAP-Rule" id="MF_01109"/>
    </source>
</evidence>
<keyword id="KW-0028">Amino-acid biosynthesis</keyword>
<keyword id="KW-0055">Arginine biosynthesis</keyword>
<keyword id="KW-0963">Cytoplasm</keyword>
<keyword id="KW-1185">Reference proteome</keyword>
<keyword id="KW-0808">Transferase</keyword>
<feature type="chain" id="PRO_0000112887" description="Ornithine carbamoyltransferase">
    <location>
        <begin position="1"/>
        <end position="321"/>
    </location>
</feature>
<feature type="binding site" evidence="2">
    <location>
        <begin position="53"/>
        <end position="56"/>
    </location>
    <ligand>
        <name>carbamoyl phosphate</name>
        <dbReference type="ChEBI" id="CHEBI:58228"/>
    </ligand>
</feature>
<feature type="binding site" evidence="2">
    <location>
        <position position="80"/>
    </location>
    <ligand>
        <name>carbamoyl phosphate</name>
        <dbReference type="ChEBI" id="CHEBI:58228"/>
    </ligand>
</feature>
<feature type="binding site" evidence="2">
    <location>
        <position position="104"/>
    </location>
    <ligand>
        <name>carbamoyl phosphate</name>
        <dbReference type="ChEBI" id="CHEBI:58228"/>
    </ligand>
</feature>
<feature type="binding site" evidence="2">
    <location>
        <begin position="131"/>
        <end position="134"/>
    </location>
    <ligand>
        <name>carbamoyl phosphate</name>
        <dbReference type="ChEBI" id="CHEBI:58228"/>
    </ligand>
</feature>
<feature type="binding site" evidence="2">
    <location>
        <position position="166"/>
    </location>
    <ligand>
        <name>L-ornithine</name>
        <dbReference type="ChEBI" id="CHEBI:46911"/>
    </ligand>
</feature>
<feature type="binding site" evidence="2">
    <location>
        <position position="230"/>
    </location>
    <ligand>
        <name>L-ornithine</name>
        <dbReference type="ChEBI" id="CHEBI:46911"/>
    </ligand>
</feature>
<feature type="binding site" evidence="2">
    <location>
        <begin position="234"/>
        <end position="235"/>
    </location>
    <ligand>
        <name>L-ornithine</name>
        <dbReference type="ChEBI" id="CHEBI:46911"/>
    </ligand>
</feature>
<feature type="binding site" evidence="2">
    <location>
        <begin position="270"/>
        <end position="271"/>
    </location>
    <ligand>
        <name>carbamoyl phosphate</name>
        <dbReference type="ChEBI" id="CHEBI:58228"/>
    </ligand>
</feature>
<feature type="binding site" evidence="2">
    <location>
        <position position="298"/>
    </location>
    <ligand>
        <name>carbamoyl phosphate</name>
        <dbReference type="ChEBI" id="CHEBI:58228"/>
    </ligand>
</feature>
<comment type="function">
    <text evidence="1">Reversibly catalyzes the transfer of the carbamoyl group from carbamoyl phosphate (CP) to the N(epsilon) atom of ornithine (ORN) to produce L-citrulline.</text>
</comment>
<comment type="catalytic activity">
    <reaction evidence="2">
        <text>carbamoyl phosphate + L-ornithine = L-citrulline + phosphate + H(+)</text>
        <dbReference type="Rhea" id="RHEA:19513"/>
        <dbReference type="ChEBI" id="CHEBI:15378"/>
        <dbReference type="ChEBI" id="CHEBI:43474"/>
        <dbReference type="ChEBI" id="CHEBI:46911"/>
        <dbReference type="ChEBI" id="CHEBI:57743"/>
        <dbReference type="ChEBI" id="CHEBI:58228"/>
        <dbReference type="EC" id="2.1.3.3"/>
    </reaction>
</comment>
<comment type="pathway">
    <text evidence="2">Amino-acid biosynthesis; L-arginine biosynthesis; L-arginine from L-ornithine and carbamoyl phosphate: step 1/3.</text>
</comment>
<comment type="subcellular location">
    <subcellularLocation>
        <location evidence="2">Cytoplasm</location>
    </subcellularLocation>
</comment>
<comment type="similarity">
    <text evidence="2">Belongs to the aspartate/ornithine carbamoyltransferase superfamily. OTCase family.</text>
</comment>
<organism>
    <name type="scientific">Bifidobacterium longum (strain NCC 2705)</name>
    <dbReference type="NCBI Taxonomy" id="206672"/>
    <lineage>
        <taxon>Bacteria</taxon>
        <taxon>Bacillati</taxon>
        <taxon>Actinomycetota</taxon>
        <taxon>Actinomycetes</taxon>
        <taxon>Bifidobacteriales</taxon>
        <taxon>Bifidobacteriaceae</taxon>
        <taxon>Bifidobacterium</taxon>
    </lineage>
</organism>